<reference key="1">
    <citation type="journal article" date="1998" name="Mamm. Genome">
        <title>Cloning and chromosomal localization of mouse keratocan, a corneal keratan sulfate proteoglycan.</title>
        <authorList>
            <person name="Dunlevy J.R."/>
            <person name="Chakravarti S."/>
            <person name="Gyalzen P."/>
            <person name="Vergnes J.-P."/>
            <person name="Hassell J.R."/>
        </authorList>
    </citation>
    <scope>NUCLEOTIDE SEQUENCE [MRNA]</scope>
    <source>
        <strain>AKR/J X C57L/J</strain>
        <tissue>Eye</tissue>
    </source>
</reference>
<reference key="2">
    <citation type="journal article" date="1998" name="J. Biol. Chem.">
        <title>The cloning of mouse keratocan cDNA and genomic DNA and the characterization of its expression during eye development.</title>
        <authorList>
            <person name="Liu C.-Y."/>
            <person name="Shiraishi A."/>
            <person name="Kao C.W.-C."/>
            <person name="Converse R.L."/>
            <person name="Funderburgh J.L."/>
            <person name="Corpuz L.M."/>
            <person name="Conrad G.W."/>
            <person name="Kao W.W.-Y."/>
        </authorList>
    </citation>
    <scope>NUCLEOTIDE SEQUENCE [GENOMIC DNA]</scope>
    <source>
        <strain>129/SvJ</strain>
        <tissue>Cornea</tissue>
    </source>
</reference>
<keyword id="KW-1015">Disulfide bond</keyword>
<keyword id="KW-0272">Extracellular matrix</keyword>
<keyword id="KW-0325">Glycoprotein</keyword>
<keyword id="KW-0433">Leucine-rich repeat</keyword>
<keyword id="KW-0654">Proteoglycan</keyword>
<keyword id="KW-1185">Reference proteome</keyword>
<keyword id="KW-0677">Repeat</keyword>
<keyword id="KW-0964">Secreted</keyword>
<keyword id="KW-0732">Signal</keyword>
<sequence length="351" mass="40404">MATPNCLILWVLLIADTVWTQSVRQAYEIQDPEDWDVHDDFYCPRECFCPPSFPTALYCENRGLTEIPPIPSRIWYLYLENNLIESIPEKPFENATQLRWINLNKNKITNYGIEKGALSQLKKLLFLFLEDNELEEVPSPLPRSLEQLQLARNKVSRIPQGTFSNLENLTLLDLQHNKLLDNAFQRDTFKGLKNLMQLNMAKNALRNMPPRLPANTMQLFLDNNSIEGIPENYFNVIPKVAFLRLNHNKLSDAGLPSRGFDVSSILDLQLSYNQLTNFPRINANLQHLHLDHNKIKNVNMSVICPTTLRAEQDAFIHGPQLSYLRLDGNEIKPPIPIDLVACFKLLQAFII</sequence>
<name>KERA_MOUSE</name>
<comment type="function">
    <text>May be important in developing and maintaining corneal transparency and for the structure of the stromal matrix.</text>
</comment>
<comment type="subcellular location">
    <subcellularLocation>
        <location evidence="1">Secreted</location>
        <location evidence="1">Extracellular space</location>
        <location evidence="1">Extracellular matrix</location>
    </subcellularLocation>
</comment>
<comment type="tissue specificity">
    <text>Selectively expressed in cornea of adult where it is detected in keratocytes but not in scleral cells. In embryo, first detected in periocular mesenchymal cells migrating toward developing cornea on 13.5 dpc; expression gradually restricted to corneal stromal cells on 14.5 to 18.5 dpc. Detected in scleral cells of 15.5 dpc but not in 18.5 dpc embryos.</text>
</comment>
<comment type="PTM">
    <text>Binds keratan sulfate chains.</text>
</comment>
<comment type="similarity">
    <text evidence="4">Belongs to the small leucine-rich proteoglycan (SLRP) family. SLRP class II subfamily.</text>
</comment>
<proteinExistence type="evidence at transcript level"/>
<organism>
    <name type="scientific">Mus musculus</name>
    <name type="common">Mouse</name>
    <dbReference type="NCBI Taxonomy" id="10090"/>
    <lineage>
        <taxon>Eukaryota</taxon>
        <taxon>Metazoa</taxon>
        <taxon>Chordata</taxon>
        <taxon>Craniata</taxon>
        <taxon>Vertebrata</taxon>
        <taxon>Euteleostomi</taxon>
        <taxon>Mammalia</taxon>
        <taxon>Eutheria</taxon>
        <taxon>Euarchontoglires</taxon>
        <taxon>Glires</taxon>
        <taxon>Rodentia</taxon>
        <taxon>Myomorpha</taxon>
        <taxon>Muroidea</taxon>
        <taxon>Muridae</taxon>
        <taxon>Murinae</taxon>
        <taxon>Mus</taxon>
        <taxon>Mus</taxon>
    </lineage>
</organism>
<feature type="signal peptide" evidence="3">
    <location>
        <begin position="1"/>
        <end position="20"/>
    </location>
</feature>
<feature type="chain" id="PRO_0000032749" description="Keratocan">
    <location>
        <begin position="21"/>
        <end position="351"/>
    </location>
</feature>
<feature type="domain" description="LRRNT">
    <location>
        <begin position="34"/>
        <end position="72"/>
    </location>
</feature>
<feature type="repeat" description="LRR 1">
    <location>
        <begin position="73"/>
        <end position="94"/>
    </location>
</feature>
<feature type="repeat" description="LRR 2">
    <location>
        <begin position="97"/>
        <end position="118"/>
    </location>
</feature>
<feature type="repeat" description="LRR 3">
    <location>
        <begin position="123"/>
        <end position="143"/>
    </location>
</feature>
<feature type="repeat" description="LRR 4">
    <location>
        <begin position="144"/>
        <end position="165"/>
    </location>
</feature>
<feature type="repeat" description="LRR 5">
    <location>
        <begin position="168"/>
        <end position="181"/>
    </location>
</feature>
<feature type="repeat" description="LRR 6">
    <location>
        <begin position="194"/>
        <end position="214"/>
    </location>
</feature>
<feature type="repeat" description="LRR 7">
    <location>
        <begin position="215"/>
        <end position="236"/>
    </location>
</feature>
<feature type="repeat" description="LRR 8">
    <location>
        <begin position="239"/>
        <end position="259"/>
    </location>
</feature>
<feature type="repeat" description="LRR 9">
    <location>
        <begin position="264"/>
        <end position="283"/>
    </location>
</feature>
<feature type="repeat" description="LRR 10">
    <location>
        <begin position="284"/>
        <end position="305"/>
    </location>
</feature>
<feature type="glycosylation site" description="N-linked (GlcNAc...) (keratan sulfate) asparagine" evidence="1">
    <location>
        <position position="94"/>
    </location>
</feature>
<feature type="glycosylation site" description="N-linked (GlcNAc...) (keratan sulfate) asparagine" evidence="1">
    <location>
        <position position="168"/>
    </location>
</feature>
<feature type="glycosylation site" description="N-linked (GlcNAc...) asparagine" evidence="3">
    <location>
        <position position="223"/>
    </location>
</feature>
<feature type="glycosylation site" description="N-linked (GlcNAc...) asparagine" evidence="3">
    <location>
        <position position="299"/>
    </location>
</feature>
<feature type="disulfide bond" evidence="2">
    <location>
        <begin position="43"/>
        <end position="49"/>
    </location>
</feature>
<feature type="disulfide bond" evidence="2">
    <location>
        <begin position="47"/>
        <end position="59"/>
    </location>
</feature>
<feature type="disulfide bond" evidence="2">
    <location>
        <begin position="304"/>
        <end position="342"/>
    </location>
</feature>
<dbReference type="EMBL" id="AF022256">
    <property type="protein sequence ID" value="AAC15505.1"/>
    <property type="molecule type" value="mRNA"/>
</dbReference>
<dbReference type="EMBL" id="AF057301">
    <property type="protein sequence ID" value="AAC61257.1"/>
    <property type="molecule type" value="Genomic_DNA"/>
</dbReference>
<dbReference type="CCDS" id="CCDS36044.1"/>
<dbReference type="RefSeq" id="NP_032464.1">
    <property type="nucleotide sequence ID" value="NM_008438.3"/>
</dbReference>
<dbReference type="RefSeq" id="XP_006513336.1">
    <property type="nucleotide sequence ID" value="XM_006513273.5"/>
</dbReference>
<dbReference type="SMR" id="O35367"/>
<dbReference type="FunCoup" id="O35367">
    <property type="interactions" value="218"/>
</dbReference>
<dbReference type="STRING" id="10090.ENSMUSP00000100923"/>
<dbReference type="GlyCosmos" id="O35367">
    <property type="glycosylation" value="4 sites, No reported glycans"/>
</dbReference>
<dbReference type="GlyGen" id="O35367">
    <property type="glycosylation" value="4 sites"/>
</dbReference>
<dbReference type="iPTMnet" id="O35367"/>
<dbReference type="PhosphoSitePlus" id="O35367"/>
<dbReference type="jPOST" id="O35367"/>
<dbReference type="PaxDb" id="10090-ENSMUSP00000100923"/>
<dbReference type="ProteomicsDB" id="263595"/>
<dbReference type="Antibodypedia" id="30000">
    <property type="antibodies" value="135 antibodies from 24 providers"/>
</dbReference>
<dbReference type="DNASU" id="16545"/>
<dbReference type="Ensembl" id="ENSMUST00000105286.4">
    <property type="protein sequence ID" value="ENSMUSP00000100923.3"/>
    <property type="gene ID" value="ENSMUSG00000019932.9"/>
</dbReference>
<dbReference type="GeneID" id="16545"/>
<dbReference type="KEGG" id="mmu:16545"/>
<dbReference type="UCSC" id="uc007gxa.1">
    <property type="organism name" value="mouse"/>
</dbReference>
<dbReference type="AGR" id="MGI:1202398"/>
<dbReference type="CTD" id="11081"/>
<dbReference type="MGI" id="MGI:1202398">
    <property type="gene designation" value="Kera"/>
</dbReference>
<dbReference type="VEuPathDB" id="HostDB:ENSMUSG00000019932"/>
<dbReference type="eggNOG" id="KOG0619">
    <property type="taxonomic scope" value="Eukaryota"/>
</dbReference>
<dbReference type="GeneTree" id="ENSGT00940000158968"/>
<dbReference type="HOGENOM" id="CLU_000288_186_4_1"/>
<dbReference type="InParanoid" id="O35367"/>
<dbReference type="OMA" id="MECFCPP"/>
<dbReference type="OrthoDB" id="5789657at2759"/>
<dbReference type="PhylomeDB" id="O35367"/>
<dbReference type="TreeFam" id="TF334562"/>
<dbReference type="Reactome" id="R-MMU-2022854">
    <property type="pathway name" value="Keratan sulfate biosynthesis"/>
</dbReference>
<dbReference type="Reactome" id="R-MMU-2022857">
    <property type="pathway name" value="Keratan sulfate degradation"/>
</dbReference>
<dbReference type="BioGRID-ORCS" id="16545">
    <property type="hits" value="1 hit in 77 CRISPR screens"/>
</dbReference>
<dbReference type="PRO" id="PR:O35367"/>
<dbReference type="Proteomes" id="UP000000589">
    <property type="component" value="Chromosome 10"/>
</dbReference>
<dbReference type="RNAct" id="O35367">
    <property type="molecule type" value="protein"/>
</dbReference>
<dbReference type="Bgee" id="ENSMUSG00000019932">
    <property type="expression patterns" value="Expressed in cornea and 93 other cell types or tissues"/>
</dbReference>
<dbReference type="ExpressionAtlas" id="O35367">
    <property type="expression patterns" value="baseline and differential"/>
</dbReference>
<dbReference type="GO" id="GO:0005576">
    <property type="term" value="C:extracellular region"/>
    <property type="evidence" value="ECO:0007669"/>
    <property type="project" value="UniProtKB-KW"/>
</dbReference>
<dbReference type="GO" id="GO:0061303">
    <property type="term" value="P:cornea development in camera-type eye"/>
    <property type="evidence" value="ECO:0000315"/>
    <property type="project" value="MGI"/>
</dbReference>
<dbReference type="FunFam" id="3.80.10.10:FF:000092">
    <property type="entry name" value="keratocan isoform X1"/>
    <property type="match status" value="1"/>
</dbReference>
<dbReference type="FunFam" id="3.80.10.10:FF:000133">
    <property type="entry name" value="prolargin"/>
    <property type="match status" value="1"/>
</dbReference>
<dbReference type="Gene3D" id="3.80.10.10">
    <property type="entry name" value="Ribonuclease Inhibitor"/>
    <property type="match status" value="2"/>
</dbReference>
<dbReference type="InterPro" id="IPR001611">
    <property type="entry name" value="Leu-rich_rpt"/>
</dbReference>
<dbReference type="InterPro" id="IPR003591">
    <property type="entry name" value="Leu-rich_rpt_typical-subtyp"/>
</dbReference>
<dbReference type="InterPro" id="IPR032675">
    <property type="entry name" value="LRR_dom_sf"/>
</dbReference>
<dbReference type="InterPro" id="IPR000372">
    <property type="entry name" value="LRRNT"/>
</dbReference>
<dbReference type="InterPro" id="IPR050333">
    <property type="entry name" value="SLRP"/>
</dbReference>
<dbReference type="PANTHER" id="PTHR45712">
    <property type="entry name" value="AGAP008170-PA"/>
    <property type="match status" value="1"/>
</dbReference>
<dbReference type="PANTHER" id="PTHR45712:SF13">
    <property type="entry name" value="KERATOCAN"/>
    <property type="match status" value="1"/>
</dbReference>
<dbReference type="Pfam" id="PF13516">
    <property type="entry name" value="LRR_6"/>
    <property type="match status" value="1"/>
</dbReference>
<dbReference type="Pfam" id="PF13855">
    <property type="entry name" value="LRR_8"/>
    <property type="match status" value="2"/>
</dbReference>
<dbReference type="Pfam" id="PF01462">
    <property type="entry name" value="LRRNT"/>
    <property type="match status" value="1"/>
</dbReference>
<dbReference type="SMART" id="SM00364">
    <property type="entry name" value="LRR_BAC"/>
    <property type="match status" value="5"/>
</dbReference>
<dbReference type="SMART" id="SM00369">
    <property type="entry name" value="LRR_TYP"/>
    <property type="match status" value="6"/>
</dbReference>
<dbReference type="SMART" id="SM00013">
    <property type="entry name" value="LRRNT"/>
    <property type="match status" value="1"/>
</dbReference>
<dbReference type="SUPFAM" id="SSF52058">
    <property type="entry name" value="L domain-like"/>
    <property type="match status" value="1"/>
</dbReference>
<dbReference type="PROSITE" id="PS51450">
    <property type="entry name" value="LRR"/>
    <property type="match status" value="10"/>
</dbReference>
<gene>
    <name type="primary">Kera</name>
    <name type="synonym">Ktcn</name>
</gene>
<protein>
    <recommendedName>
        <fullName>Keratocan</fullName>
        <shortName>KTN</shortName>
    </recommendedName>
    <alternativeName>
        <fullName>Keratan sulfate proteoglycan keratocan</fullName>
    </alternativeName>
</protein>
<evidence type="ECO:0000250" key="1"/>
<evidence type="ECO:0000250" key="2">
    <source>
        <dbReference type="UniProtKB" id="P21793"/>
    </source>
</evidence>
<evidence type="ECO:0000255" key="3"/>
<evidence type="ECO:0000305" key="4"/>
<accession>O35367</accession>